<keyword id="KW-0963">Cytoplasm</keyword>
<keyword id="KW-0217">Developmental protein</keyword>
<keyword id="KW-0238">DNA-binding</keyword>
<keyword id="KW-0479">Metal-binding</keyword>
<keyword id="KW-0539">Nucleus</keyword>
<keyword id="KW-1185">Reference proteome</keyword>
<keyword id="KW-0677">Repeat</keyword>
<keyword id="KW-0678">Repressor</keyword>
<keyword id="KW-0804">Transcription</keyword>
<keyword id="KW-0805">Transcription regulation</keyword>
<keyword id="KW-0832">Ubl conjugation</keyword>
<keyword id="KW-0862">Zinc</keyword>
<keyword id="KW-0863">Zinc-finger</keyword>
<evidence type="ECO:0000250" key="1">
    <source>
        <dbReference type="UniProtKB" id="O43623"/>
    </source>
</evidence>
<evidence type="ECO:0000255" key="2">
    <source>
        <dbReference type="PROSITE-ProRule" id="PRU00042"/>
    </source>
</evidence>
<evidence type="ECO:0000256" key="3">
    <source>
        <dbReference type="SAM" id="MobiDB-lite"/>
    </source>
</evidence>
<evidence type="ECO:0000269" key="4">
    <source>
    </source>
</evidence>
<evidence type="ECO:0000305" key="5"/>
<name>SNAI2_RAT</name>
<proteinExistence type="evidence at transcript level"/>
<gene>
    <name type="primary">Snai2</name>
    <name type="synonym">Slug</name>
    <name type="synonym">Slugh</name>
</gene>
<accession>O08954</accession>
<accession>Q8R482</accession>
<feature type="chain" id="PRO_0000047034" description="Zinc finger protein SNAI2">
    <location>
        <begin position="1"/>
        <end position="268"/>
    </location>
</feature>
<feature type="zinc finger region" description="C2H2-type 1" evidence="2">
    <location>
        <begin position="128"/>
        <end position="150"/>
    </location>
</feature>
<feature type="zinc finger region" description="C2H2-type 2" evidence="2">
    <location>
        <begin position="159"/>
        <end position="181"/>
    </location>
</feature>
<feature type="zinc finger region" description="C2H2-type 3" evidence="2">
    <location>
        <begin position="185"/>
        <end position="207"/>
    </location>
</feature>
<feature type="zinc finger region" description="C2H2-type 4" evidence="2">
    <location>
        <begin position="213"/>
        <end position="235"/>
    </location>
</feature>
<feature type="zinc finger region" description="C2H2-type 5; atypical" evidence="2">
    <location>
        <begin position="241"/>
        <end position="264"/>
    </location>
</feature>
<feature type="region of interest" description="SNAG domain" evidence="1">
    <location>
        <begin position="1"/>
        <end position="20"/>
    </location>
</feature>
<feature type="region of interest" description="Disordered" evidence="3">
    <location>
        <begin position="84"/>
        <end position="116"/>
    </location>
</feature>
<organism>
    <name type="scientific">Rattus norvegicus</name>
    <name type="common">Rat</name>
    <dbReference type="NCBI Taxonomy" id="10116"/>
    <lineage>
        <taxon>Eukaryota</taxon>
        <taxon>Metazoa</taxon>
        <taxon>Chordata</taxon>
        <taxon>Craniata</taxon>
        <taxon>Vertebrata</taxon>
        <taxon>Euteleostomi</taxon>
        <taxon>Mammalia</taxon>
        <taxon>Eutheria</taxon>
        <taxon>Euarchontoglires</taxon>
        <taxon>Glires</taxon>
        <taxon>Rodentia</taxon>
        <taxon>Myomorpha</taxon>
        <taxon>Muroidea</taxon>
        <taxon>Muridae</taxon>
        <taxon>Murinae</taxon>
        <taxon>Rattus</taxon>
    </lineage>
</organism>
<sequence length="268" mass="29936">MPRSFLVKKHFNASKKPNYSELDTHTVIISPYLCESYPMPVIPKPEILTSGAYSPITVWTSAVPFHSPLPSGLSPLTGYSSSLGRVSPLPSSDTSSKDHSGSESPISDEEERLQPKLSDPHAIEAEKFQCNLCNKTYSTFSGLAKHKQLHCDAQARKSFSCKYCDKEYVSLGALKMHIRTHTLPCVCKICGKAFSRPWLLQGHIRTHTGEKPFSCPHCNRAFADRSNLRAHLQTHSDVKKYQCKNCSKTFSRMSLLHKHEESGCCVAH</sequence>
<protein>
    <recommendedName>
        <fullName>Zinc finger protein SNAI2</fullName>
    </recommendedName>
    <alternativeName>
        <fullName>Neural crest transcription factor Slug</fullName>
    </alternativeName>
    <alternativeName>
        <fullName>Protein snail homolog 2</fullName>
    </alternativeName>
</protein>
<reference key="1">
    <citation type="submission" date="2002-04" db="EMBL/GenBank/DDBJ databases">
        <title>Regulation of insulin producing beta-cells survival by SLUG, a zinc-finger transcription factor, with homology to CES-1.</title>
        <authorList>
            <person name="Ubeda M."/>
            <person name="Habener J."/>
        </authorList>
    </citation>
    <scope>NUCLEOTIDE SEQUENCE [MRNA]</scope>
</reference>
<reference key="2">
    <citation type="journal article" date="1997" name="J. Cell Biol.">
        <title>The zinc-finger protein Slug causes desmosome dissociation, an initial and necessary step for growth factor-induced epithelial-mesenchymal transition.</title>
        <authorList>
            <person name="Savagner P."/>
            <person name="Yamada K.M."/>
            <person name="Thiery J.P."/>
        </authorList>
    </citation>
    <scope>NUCLEOTIDE SEQUENCE [MRNA] OF 23-172</scope>
</reference>
<reference key="3">
    <citation type="journal article" date="2007" name="Oncogene">
        <title>Raf 1 represses expression of the tight junction protein occludin via activation of the zinc-finger transcription factor slug.</title>
        <authorList>
            <person name="Wang Z."/>
            <person name="Wade P."/>
            <person name="Mandell K.J."/>
            <person name="Akyildiz A."/>
            <person name="Parkos C.A."/>
            <person name="Mrsny R.J."/>
            <person name="Nusrat A."/>
        </authorList>
    </citation>
    <scope>FUNCTION</scope>
</reference>
<dbReference type="EMBL" id="AF497973">
    <property type="protein sequence ID" value="AAM19227.1"/>
    <property type="molecule type" value="mRNA"/>
</dbReference>
<dbReference type="EMBL" id="U97061">
    <property type="protein sequence ID" value="AAB58706.1"/>
    <property type="molecule type" value="mRNA"/>
</dbReference>
<dbReference type="RefSeq" id="NP_037167.1">
    <property type="nucleotide sequence ID" value="NM_013035.2"/>
</dbReference>
<dbReference type="SMR" id="O08954"/>
<dbReference type="FunCoup" id="O08954">
    <property type="interactions" value="1309"/>
</dbReference>
<dbReference type="STRING" id="10116.ENSRNOP00000064195"/>
<dbReference type="PhosphoSitePlus" id="O08954"/>
<dbReference type="PaxDb" id="10116-ENSRNOP00000064195"/>
<dbReference type="Ensembl" id="ENSRNOT00000073049.3">
    <property type="protein sequence ID" value="ENSRNOP00000064195.1"/>
    <property type="gene ID" value="ENSRNOG00000047699.3"/>
</dbReference>
<dbReference type="GeneID" id="25554"/>
<dbReference type="KEGG" id="rno:25554"/>
<dbReference type="AGR" id="RGD:3722"/>
<dbReference type="CTD" id="6591"/>
<dbReference type="RGD" id="3722">
    <property type="gene designation" value="Snai2"/>
</dbReference>
<dbReference type="eggNOG" id="KOG2462">
    <property type="taxonomic scope" value="Eukaryota"/>
</dbReference>
<dbReference type="GeneTree" id="ENSGT00940000154681"/>
<dbReference type="HOGENOM" id="CLU_002678_42_3_1"/>
<dbReference type="InParanoid" id="O08954"/>
<dbReference type="OMA" id="HFNSAKK"/>
<dbReference type="OrthoDB" id="5428132at2759"/>
<dbReference type="PhylomeDB" id="O08954"/>
<dbReference type="PRO" id="PR:O08954"/>
<dbReference type="Proteomes" id="UP000002494">
    <property type="component" value="Chromosome 11"/>
</dbReference>
<dbReference type="Bgee" id="ENSRNOG00000047699">
    <property type="expression patterns" value="Expressed in liver and 18 other cell types or tissues"/>
</dbReference>
<dbReference type="GO" id="GO:0000785">
    <property type="term" value="C:chromatin"/>
    <property type="evidence" value="ECO:0000266"/>
    <property type="project" value="RGD"/>
</dbReference>
<dbReference type="GO" id="GO:0005737">
    <property type="term" value="C:cytoplasm"/>
    <property type="evidence" value="ECO:0000266"/>
    <property type="project" value="RGD"/>
</dbReference>
<dbReference type="GO" id="GO:0005634">
    <property type="term" value="C:nucleus"/>
    <property type="evidence" value="ECO:0000250"/>
    <property type="project" value="UniProtKB"/>
</dbReference>
<dbReference type="GO" id="GO:0003682">
    <property type="term" value="F:chromatin binding"/>
    <property type="evidence" value="ECO:0000266"/>
    <property type="project" value="RGD"/>
</dbReference>
<dbReference type="GO" id="GO:0000981">
    <property type="term" value="F:DNA-binding transcription factor activity, RNA polymerase II-specific"/>
    <property type="evidence" value="ECO:0000266"/>
    <property type="project" value="RGD"/>
</dbReference>
<dbReference type="GO" id="GO:0001227">
    <property type="term" value="F:DNA-binding transcription repressor activity, RNA polymerase II-specific"/>
    <property type="evidence" value="ECO:0000266"/>
    <property type="project" value="RGD"/>
</dbReference>
<dbReference type="GO" id="GO:0070888">
    <property type="term" value="F:E-box binding"/>
    <property type="evidence" value="ECO:0000266"/>
    <property type="project" value="RGD"/>
</dbReference>
<dbReference type="GO" id="GO:0000978">
    <property type="term" value="F:RNA polymerase II cis-regulatory region sequence-specific DNA binding"/>
    <property type="evidence" value="ECO:0000318"/>
    <property type="project" value="GO_Central"/>
</dbReference>
<dbReference type="GO" id="GO:0000977">
    <property type="term" value="F:RNA polymerase II transcription regulatory region sequence-specific DNA binding"/>
    <property type="evidence" value="ECO:0000266"/>
    <property type="project" value="RGD"/>
</dbReference>
<dbReference type="GO" id="GO:0043565">
    <property type="term" value="F:sequence-specific DNA binding"/>
    <property type="evidence" value="ECO:0000266"/>
    <property type="project" value="RGD"/>
</dbReference>
<dbReference type="GO" id="GO:1990837">
    <property type="term" value="F:sequence-specific double-stranded DNA binding"/>
    <property type="evidence" value="ECO:0000266"/>
    <property type="project" value="RGD"/>
</dbReference>
<dbReference type="GO" id="GO:0008270">
    <property type="term" value="F:zinc ion binding"/>
    <property type="evidence" value="ECO:0007669"/>
    <property type="project" value="UniProtKB-KW"/>
</dbReference>
<dbReference type="GO" id="GO:0060536">
    <property type="term" value="P:cartilage morphogenesis"/>
    <property type="evidence" value="ECO:0000266"/>
    <property type="project" value="RGD"/>
</dbReference>
<dbReference type="GO" id="GO:0003273">
    <property type="term" value="P:cell migration involved in endocardial cushion formation"/>
    <property type="evidence" value="ECO:0000266"/>
    <property type="project" value="RGD"/>
</dbReference>
<dbReference type="GO" id="GO:0071364">
    <property type="term" value="P:cellular response to epidermal growth factor stimulus"/>
    <property type="evidence" value="ECO:0000266"/>
    <property type="project" value="RGD"/>
</dbReference>
<dbReference type="GO" id="GO:0044344">
    <property type="term" value="P:cellular response to fibroblast growth factor stimulus"/>
    <property type="evidence" value="ECO:0000270"/>
    <property type="project" value="RGD"/>
</dbReference>
<dbReference type="GO" id="GO:0071479">
    <property type="term" value="P:cellular response to ionizing radiation"/>
    <property type="evidence" value="ECO:0000266"/>
    <property type="project" value="RGD"/>
</dbReference>
<dbReference type="GO" id="GO:0006325">
    <property type="term" value="P:chromatin organization"/>
    <property type="evidence" value="ECO:0000266"/>
    <property type="project" value="RGD"/>
</dbReference>
<dbReference type="GO" id="GO:0035921">
    <property type="term" value="P:desmosome disassembly"/>
    <property type="evidence" value="ECO:0000266"/>
    <property type="project" value="RGD"/>
</dbReference>
<dbReference type="GO" id="GO:0043542">
    <property type="term" value="P:endothelial cell migration"/>
    <property type="evidence" value="ECO:0000266"/>
    <property type="project" value="RGD"/>
</dbReference>
<dbReference type="GO" id="GO:0010631">
    <property type="term" value="P:epithelial cell migration"/>
    <property type="evidence" value="ECO:0000266"/>
    <property type="project" value="RGD"/>
</dbReference>
<dbReference type="GO" id="GO:0001837">
    <property type="term" value="P:epithelial to mesenchymal transition"/>
    <property type="evidence" value="ECO:0000266"/>
    <property type="project" value="RGD"/>
</dbReference>
<dbReference type="GO" id="GO:0003198">
    <property type="term" value="P:epithelial to mesenchymal transition involved in endocardial cushion formation"/>
    <property type="evidence" value="ECO:0000266"/>
    <property type="project" value="RGD"/>
</dbReference>
<dbReference type="GO" id="GO:0060429">
    <property type="term" value="P:epithelium development"/>
    <property type="evidence" value="ECO:0000266"/>
    <property type="project" value="RGD"/>
</dbReference>
<dbReference type="GO" id="GO:0071425">
    <property type="term" value="P:hematopoietic stem cell proliferation"/>
    <property type="evidence" value="ECO:0000266"/>
    <property type="project" value="RGD"/>
</dbReference>
<dbReference type="GO" id="GO:0033028">
    <property type="term" value="P:myeloid cell apoptotic process"/>
    <property type="evidence" value="ECO:0000266"/>
    <property type="project" value="RGD"/>
</dbReference>
<dbReference type="GO" id="GO:2000811">
    <property type="term" value="P:negative regulation of anoikis"/>
    <property type="evidence" value="ECO:0000266"/>
    <property type="project" value="RGD"/>
</dbReference>
<dbReference type="GO" id="GO:0090090">
    <property type="term" value="P:negative regulation of canonical Wnt signaling pathway"/>
    <property type="evidence" value="ECO:0000266"/>
    <property type="project" value="RGD"/>
</dbReference>
<dbReference type="GO" id="GO:0006933">
    <property type="term" value="P:negative regulation of cell adhesion involved in substrate-bound cell migration"/>
    <property type="evidence" value="ECO:0000266"/>
    <property type="project" value="RGD"/>
</dbReference>
<dbReference type="GO" id="GO:0033629">
    <property type="term" value="P:negative regulation of cell adhesion mediated by integrin"/>
    <property type="evidence" value="ECO:0000266"/>
    <property type="project" value="RGD"/>
</dbReference>
<dbReference type="GO" id="GO:0032331">
    <property type="term" value="P:negative regulation of chondrocyte differentiation"/>
    <property type="evidence" value="ECO:0000266"/>
    <property type="project" value="RGD"/>
</dbReference>
<dbReference type="GO" id="GO:0043518">
    <property type="term" value="P:negative regulation of DNA damage response, signal transduction by p53 class mediator"/>
    <property type="evidence" value="ECO:0000266"/>
    <property type="project" value="RGD"/>
</dbReference>
<dbReference type="GO" id="GO:2001240">
    <property type="term" value="P:negative regulation of extrinsic apoptotic signaling pathway in absence of ligand"/>
    <property type="evidence" value="ECO:0000266"/>
    <property type="project" value="RGD"/>
</dbReference>
<dbReference type="GO" id="GO:1902034">
    <property type="term" value="P:negative regulation of hematopoietic stem cell proliferation"/>
    <property type="evidence" value="ECO:0000266"/>
    <property type="project" value="RGD"/>
</dbReference>
<dbReference type="GO" id="GO:1902230">
    <property type="term" value="P:negative regulation of intrinsic apoptotic signaling pathway in response to DNA damage"/>
    <property type="evidence" value="ECO:0000266"/>
    <property type="project" value="RGD"/>
</dbReference>
<dbReference type="GO" id="GO:0010839">
    <property type="term" value="P:negative regulation of keratinocyte proliferation"/>
    <property type="evidence" value="ECO:0000266"/>
    <property type="project" value="RGD"/>
</dbReference>
<dbReference type="GO" id="GO:0033033">
    <property type="term" value="P:negative regulation of myeloid cell apoptotic process"/>
    <property type="evidence" value="ECO:0000266"/>
    <property type="project" value="RGD"/>
</dbReference>
<dbReference type="GO" id="GO:0000122">
    <property type="term" value="P:negative regulation of transcription by RNA polymerase II"/>
    <property type="evidence" value="ECO:0000315"/>
    <property type="project" value="RGD"/>
</dbReference>
<dbReference type="GO" id="GO:0010957">
    <property type="term" value="P:negative regulation of vitamin D biosynthetic process"/>
    <property type="evidence" value="ECO:0000266"/>
    <property type="project" value="RGD"/>
</dbReference>
<dbReference type="GO" id="GO:0070563">
    <property type="term" value="P:negative regulation of vitamin D receptor signaling pathway"/>
    <property type="evidence" value="ECO:0000266"/>
    <property type="project" value="RGD"/>
</dbReference>
<dbReference type="GO" id="GO:0014032">
    <property type="term" value="P:neural crest cell development"/>
    <property type="evidence" value="ECO:0000266"/>
    <property type="project" value="RGD"/>
</dbReference>
<dbReference type="GO" id="GO:0007219">
    <property type="term" value="P:Notch signaling pathway"/>
    <property type="evidence" value="ECO:0000266"/>
    <property type="project" value="RGD"/>
</dbReference>
<dbReference type="GO" id="GO:0001649">
    <property type="term" value="P:osteoblast differentiation"/>
    <property type="evidence" value="ECO:0000266"/>
    <property type="project" value="RGD"/>
</dbReference>
<dbReference type="GO" id="GO:0043473">
    <property type="term" value="P:pigmentation"/>
    <property type="evidence" value="ECO:0000266"/>
    <property type="project" value="RGD"/>
</dbReference>
<dbReference type="GO" id="GO:0030335">
    <property type="term" value="P:positive regulation of cell migration"/>
    <property type="evidence" value="ECO:0000266"/>
    <property type="project" value="RGD"/>
</dbReference>
<dbReference type="GO" id="GO:0045600">
    <property type="term" value="P:positive regulation of fat cell differentiation"/>
    <property type="evidence" value="ECO:0000266"/>
    <property type="project" value="RGD"/>
</dbReference>
<dbReference type="GO" id="GO:2000810">
    <property type="term" value="P:regulation of bicellular tight junction assembly"/>
    <property type="evidence" value="ECO:0000266"/>
    <property type="project" value="RGD"/>
</dbReference>
<dbReference type="GO" id="GO:0060693">
    <property type="term" value="P:regulation of branching involved in salivary gland morphogenesis"/>
    <property type="evidence" value="ECO:0000266"/>
    <property type="project" value="RGD"/>
</dbReference>
<dbReference type="GO" id="GO:0032642">
    <property type="term" value="P:regulation of chemokine production"/>
    <property type="evidence" value="ECO:0000266"/>
    <property type="project" value="RGD"/>
</dbReference>
<dbReference type="GO" id="GO:0006355">
    <property type="term" value="P:regulation of DNA-templated transcription"/>
    <property type="evidence" value="ECO:0000318"/>
    <property type="project" value="GO_Central"/>
</dbReference>
<dbReference type="GO" id="GO:0045667">
    <property type="term" value="P:regulation of osteoblast differentiation"/>
    <property type="evidence" value="ECO:0000266"/>
    <property type="project" value="RGD"/>
</dbReference>
<dbReference type="GO" id="GO:0009314">
    <property type="term" value="P:response to radiation"/>
    <property type="evidence" value="ECO:0000266"/>
    <property type="project" value="RGD"/>
</dbReference>
<dbReference type="GO" id="GO:0060021">
    <property type="term" value="P:roof of mouth development"/>
    <property type="evidence" value="ECO:0000266"/>
    <property type="project" value="RGD"/>
</dbReference>
<dbReference type="GO" id="GO:0007605">
    <property type="term" value="P:sensory perception of sound"/>
    <property type="evidence" value="ECO:0000266"/>
    <property type="project" value="RGD"/>
</dbReference>
<dbReference type="GO" id="GO:0006929">
    <property type="term" value="P:substrate-dependent cell migration"/>
    <property type="evidence" value="ECO:0000266"/>
    <property type="project" value="RGD"/>
</dbReference>
<dbReference type="GO" id="GO:0050872">
    <property type="term" value="P:white fat cell differentiation"/>
    <property type="evidence" value="ECO:0000266"/>
    <property type="project" value="RGD"/>
</dbReference>
<dbReference type="FunFam" id="3.30.160.60:FF:000085">
    <property type="entry name" value="Snail zinc finger protein"/>
    <property type="match status" value="1"/>
</dbReference>
<dbReference type="FunFam" id="3.30.160.60:FF:000942">
    <property type="entry name" value="Snail zinc finger protein"/>
    <property type="match status" value="1"/>
</dbReference>
<dbReference type="FunFam" id="3.30.160.60:FF:001114">
    <property type="entry name" value="Zinc finger protein SNAI2"/>
    <property type="match status" value="1"/>
</dbReference>
<dbReference type="FunFam" id="3.30.160.60:FF:000207">
    <property type="entry name" value="zinc finger protein SNAI2"/>
    <property type="match status" value="1"/>
</dbReference>
<dbReference type="Gene3D" id="3.30.160.60">
    <property type="entry name" value="Classic Zinc Finger"/>
    <property type="match status" value="4"/>
</dbReference>
<dbReference type="InterPro" id="IPR050527">
    <property type="entry name" value="Snail/Krueppel_Znf"/>
</dbReference>
<dbReference type="InterPro" id="IPR036236">
    <property type="entry name" value="Znf_C2H2_sf"/>
</dbReference>
<dbReference type="InterPro" id="IPR013087">
    <property type="entry name" value="Znf_C2H2_type"/>
</dbReference>
<dbReference type="PANTHER" id="PTHR24388">
    <property type="entry name" value="ZINC FINGER PROTEIN"/>
    <property type="match status" value="1"/>
</dbReference>
<dbReference type="PANTHER" id="PTHR24388:SF42">
    <property type="entry name" value="ZINC FINGER PROTEIN SNAI2"/>
    <property type="match status" value="1"/>
</dbReference>
<dbReference type="Pfam" id="PF00096">
    <property type="entry name" value="zf-C2H2"/>
    <property type="match status" value="5"/>
</dbReference>
<dbReference type="SMART" id="SM00355">
    <property type="entry name" value="ZnF_C2H2"/>
    <property type="match status" value="5"/>
</dbReference>
<dbReference type="SUPFAM" id="SSF57667">
    <property type="entry name" value="beta-beta-alpha zinc fingers"/>
    <property type="match status" value="4"/>
</dbReference>
<dbReference type="PROSITE" id="PS00028">
    <property type="entry name" value="ZINC_FINGER_C2H2_1"/>
    <property type="match status" value="4"/>
</dbReference>
<dbReference type="PROSITE" id="PS50157">
    <property type="entry name" value="ZINC_FINGER_C2H2_2"/>
    <property type="match status" value="5"/>
</dbReference>
<comment type="function">
    <text evidence="1 4">Transcriptional repressor that modulates both activator-dependent and basal transcription. Involved in the generation and migration of neural crest cells. Plays a role in mediating RAF1-induced transcriptional repression of the TJ protein, occludin (OCLN) and subsequent oncogenic transformation of epithelial cells. Represses BRCA2 expression by binding to its E2-box-containing silencer and recruiting CTBP1 and HDAC1 in breast cells. In epidermal keratinocytes, binds to the E-box in ITGA3 promoter and represses its transcription. Involved in the regulation of ITGB1 and ITGB4 expression and cell adhesion and proliferation in epidermal keratinocytes. Binds to E-box2 domain of BSG and activates its expression during TGFB1-induced epithelial-mesenchymal transition (EMT) in hepatocytes. Represses E-Cadherin/CDH1 transcription via E-box elements. Involved in osteoblast maturation. Binds to RUNX2 and SOC9 promoters and may act as a positive and negative transcription regulator, respectively, in osteoblasts. Binds to CXCL12 promoter via E-box regions in mesenchymal stem cells and osteoblasts. Plays an essential role in TWIST1-induced EMT and its ability to promote invasion and metastasis (By similarity).</text>
</comment>
<comment type="subunit">
    <text evidence="1">Interacts (via SNAG domain) with LIMD1 (via LIM domains), WTIP (via LIM domains) and AJUBA (via LIM domains) (By similarity). Interacts (via zinc fingers) with KPNA2, KPNB1 and TNPO1. May interact (via zinc fingers) with IPO7 (By similarity).</text>
</comment>
<comment type="subcellular location">
    <subcellularLocation>
        <location evidence="1">Nucleus</location>
    </subcellularLocation>
    <subcellularLocation>
        <location evidence="1">Cytoplasm</location>
    </subcellularLocation>
    <text evidence="1">Observed in discrete foci in interphase nuclei. These nuclear foci do not overlap with the nucleoli, the SP100 and the HP1 heterochromatin or the coiled body, suggesting SNAI2 is associated with active transcription or active splicing regions (By similarity).</text>
</comment>
<comment type="domain">
    <text evidence="1">Repression activity depends on the C-terminal DNA-binding zinc fingers and on the N-terminal repression domain.</text>
</comment>
<comment type="PTM">
    <text evidence="1">Phosphorylated by GSK3B. Once phosphorylated, it becomes a target for ubiquitination.</text>
</comment>
<comment type="PTM">
    <text evidence="1">Ubiquitinated by the SCF(FBXO11) complex; ubiquitination requires previous GSK3B-mediated SNAI2 phosphorylation.</text>
</comment>
<comment type="similarity">
    <text evidence="5">Belongs to the snail C2H2-type zinc-finger protein family.</text>
</comment>